<sequence length="185" mass="20726">MNNETIAKAKRNMNKSIEVYQSNLATVRAGVANASLLDRVMVEYYGVPTPLVQMAGITIPEPRVLMITPYDKSSLNDIEHAILASDLGLTPANDGNVIRLIIPQLTGERRQEIAKEVGKLAEEAKIAVRNVRQEAMKALKKQEKDGEITEDEERRLEKEVQKVTDESTKKIDQMADNKRKEIIQG</sequence>
<name>RRF_LACDB</name>
<evidence type="ECO:0000255" key="1">
    <source>
        <dbReference type="HAMAP-Rule" id="MF_00040"/>
    </source>
</evidence>
<evidence type="ECO:0000256" key="2">
    <source>
        <dbReference type="SAM" id="MobiDB-lite"/>
    </source>
</evidence>
<protein>
    <recommendedName>
        <fullName evidence="1">Ribosome-recycling factor</fullName>
        <shortName evidence="1">RRF</shortName>
    </recommendedName>
    <alternativeName>
        <fullName evidence="1">Ribosome-releasing factor</fullName>
    </alternativeName>
</protein>
<proteinExistence type="inferred from homology"/>
<reference key="1">
    <citation type="journal article" date="2006" name="Proc. Natl. Acad. Sci. U.S.A.">
        <title>Comparative genomics of the lactic acid bacteria.</title>
        <authorList>
            <person name="Makarova K.S."/>
            <person name="Slesarev A."/>
            <person name="Wolf Y.I."/>
            <person name="Sorokin A."/>
            <person name="Mirkin B."/>
            <person name="Koonin E.V."/>
            <person name="Pavlov A."/>
            <person name="Pavlova N."/>
            <person name="Karamychev V."/>
            <person name="Polouchine N."/>
            <person name="Shakhova V."/>
            <person name="Grigoriev I."/>
            <person name="Lou Y."/>
            <person name="Rohksar D."/>
            <person name="Lucas S."/>
            <person name="Huang K."/>
            <person name="Goodstein D.M."/>
            <person name="Hawkins T."/>
            <person name="Plengvidhya V."/>
            <person name="Welker D."/>
            <person name="Hughes J."/>
            <person name="Goh Y."/>
            <person name="Benson A."/>
            <person name="Baldwin K."/>
            <person name="Lee J.-H."/>
            <person name="Diaz-Muniz I."/>
            <person name="Dosti B."/>
            <person name="Smeianov V."/>
            <person name="Wechter W."/>
            <person name="Barabote R."/>
            <person name="Lorca G."/>
            <person name="Altermann E."/>
            <person name="Barrangou R."/>
            <person name="Ganesan B."/>
            <person name="Xie Y."/>
            <person name="Rawsthorne H."/>
            <person name="Tamir D."/>
            <person name="Parker C."/>
            <person name="Breidt F."/>
            <person name="Broadbent J.R."/>
            <person name="Hutkins R."/>
            <person name="O'Sullivan D."/>
            <person name="Steele J."/>
            <person name="Unlu G."/>
            <person name="Saier M.H. Jr."/>
            <person name="Klaenhammer T."/>
            <person name="Richardson P."/>
            <person name="Kozyavkin S."/>
            <person name="Weimer B.C."/>
            <person name="Mills D.A."/>
        </authorList>
    </citation>
    <scope>NUCLEOTIDE SEQUENCE [LARGE SCALE GENOMIC DNA]</scope>
    <source>
        <strain>ATCC BAA-365 / Lb-18</strain>
    </source>
</reference>
<comment type="function">
    <text evidence="1">Responsible for the release of ribosomes from messenger RNA at the termination of protein biosynthesis. May increase the efficiency of translation by recycling ribosomes from one round of translation to another.</text>
</comment>
<comment type="subcellular location">
    <subcellularLocation>
        <location evidence="1">Cytoplasm</location>
    </subcellularLocation>
</comment>
<comment type="similarity">
    <text evidence="1">Belongs to the RRF family.</text>
</comment>
<gene>
    <name evidence="1" type="primary">frr</name>
    <name type="ordered locus">LBUL_1251</name>
</gene>
<organism>
    <name type="scientific">Lactobacillus delbrueckii subsp. bulgaricus (strain ATCC BAA-365 / Lb-18)</name>
    <dbReference type="NCBI Taxonomy" id="321956"/>
    <lineage>
        <taxon>Bacteria</taxon>
        <taxon>Bacillati</taxon>
        <taxon>Bacillota</taxon>
        <taxon>Bacilli</taxon>
        <taxon>Lactobacillales</taxon>
        <taxon>Lactobacillaceae</taxon>
        <taxon>Lactobacillus</taxon>
    </lineage>
</organism>
<keyword id="KW-0963">Cytoplasm</keyword>
<keyword id="KW-0648">Protein biosynthesis</keyword>
<dbReference type="EMBL" id="CP000412">
    <property type="protein sequence ID" value="ABJ58777.1"/>
    <property type="molecule type" value="Genomic_DNA"/>
</dbReference>
<dbReference type="RefSeq" id="WP_011678400.1">
    <property type="nucleotide sequence ID" value="NC_008529.1"/>
</dbReference>
<dbReference type="SMR" id="Q049U5"/>
<dbReference type="KEGG" id="lbu:LBUL_1251"/>
<dbReference type="HOGENOM" id="CLU_073981_2_0_9"/>
<dbReference type="BioCyc" id="LDEL321956:LBUL_RS05875-MONOMER"/>
<dbReference type="GO" id="GO:0005737">
    <property type="term" value="C:cytoplasm"/>
    <property type="evidence" value="ECO:0007669"/>
    <property type="project" value="UniProtKB-SubCell"/>
</dbReference>
<dbReference type="GO" id="GO:0043023">
    <property type="term" value="F:ribosomal large subunit binding"/>
    <property type="evidence" value="ECO:0007669"/>
    <property type="project" value="TreeGrafter"/>
</dbReference>
<dbReference type="GO" id="GO:0006415">
    <property type="term" value="P:translational termination"/>
    <property type="evidence" value="ECO:0007669"/>
    <property type="project" value="UniProtKB-UniRule"/>
</dbReference>
<dbReference type="CDD" id="cd00520">
    <property type="entry name" value="RRF"/>
    <property type="match status" value="1"/>
</dbReference>
<dbReference type="FunFam" id="1.10.132.20:FF:000001">
    <property type="entry name" value="Ribosome-recycling factor"/>
    <property type="match status" value="1"/>
</dbReference>
<dbReference type="FunFam" id="3.30.1360.40:FF:000001">
    <property type="entry name" value="Ribosome-recycling factor"/>
    <property type="match status" value="1"/>
</dbReference>
<dbReference type="Gene3D" id="3.30.1360.40">
    <property type="match status" value="1"/>
</dbReference>
<dbReference type="Gene3D" id="1.10.132.20">
    <property type="entry name" value="Ribosome-recycling factor"/>
    <property type="match status" value="1"/>
</dbReference>
<dbReference type="HAMAP" id="MF_00040">
    <property type="entry name" value="RRF"/>
    <property type="match status" value="1"/>
</dbReference>
<dbReference type="InterPro" id="IPR002661">
    <property type="entry name" value="Ribosome_recyc_fac"/>
</dbReference>
<dbReference type="InterPro" id="IPR023584">
    <property type="entry name" value="Ribosome_recyc_fac_dom"/>
</dbReference>
<dbReference type="InterPro" id="IPR036191">
    <property type="entry name" value="RRF_sf"/>
</dbReference>
<dbReference type="NCBIfam" id="TIGR00496">
    <property type="entry name" value="frr"/>
    <property type="match status" value="1"/>
</dbReference>
<dbReference type="PANTHER" id="PTHR20982:SF3">
    <property type="entry name" value="MITOCHONDRIAL RIBOSOME RECYCLING FACTOR PSEUDO 1"/>
    <property type="match status" value="1"/>
</dbReference>
<dbReference type="PANTHER" id="PTHR20982">
    <property type="entry name" value="RIBOSOME RECYCLING FACTOR"/>
    <property type="match status" value="1"/>
</dbReference>
<dbReference type="Pfam" id="PF01765">
    <property type="entry name" value="RRF"/>
    <property type="match status" value="1"/>
</dbReference>
<dbReference type="SUPFAM" id="SSF55194">
    <property type="entry name" value="Ribosome recycling factor, RRF"/>
    <property type="match status" value="1"/>
</dbReference>
<accession>Q049U5</accession>
<feature type="chain" id="PRO_1000003183" description="Ribosome-recycling factor">
    <location>
        <begin position="1"/>
        <end position="185"/>
    </location>
</feature>
<feature type="region of interest" description="Disordered" evidence="2">
    <location>
        <begin position="138"/>
        <end position="185"/>
    </location>
</feature>